<comment type="function">
    <text evidence="1">Catalyzes the interconversion of 2-phosphoglycerate and 3-phosphoglycerate.</text>
</comment>
<comment type="catalytic activity">
    <reaction evidence="1">
        <text>(2R)-2-phosphoglycerate = (2R)-3-phosphoglycerate</text>
        <dbReference type="Rhea" id="RHEA:15901"/>
        <dbReference type="ChEBI" id="CHEBI:58272"/>
        <dbReference type="ChEBI" id="CHEBI:58289"/>
        <dbReference type="EC" id="5.4.2.11"/>
    </reaction>
</comment>
<comment type="pathway">
    <text evidence="1">Carbohydrate degradation; glycolysis; pyruvate from D-glyceraldehyde 3-phosphate: step 3/5.</text>
</comment>
<comment type="subunit">
    <text evidence="1">Homodimer.</text>
</comment>
<comment type="similarity">
    <text evidence="1">Belongs to the phosphoglycerate mutase family. BPG-dependent PGAM subfamily.</text>
</comment>
<proteinExistence type="inferred from homology"/>
<evidence type="ECO:0000255" key="1">
    <source>
        <dbReference type="HAMAP-Rule" id="MF_01039"/>
    </source>
</evidence>
<protein>
    <recommendedName>
        <fullName evidence="1">2,3-bisphosphoglycerate-dependent phosphoglycerate mutase</fullName>
        <shortName evidence="1">BPG-dependent PGAM</shortName>
        <shortName evidence="1">PGAM</shortName>
        <shortName evidence="1">Phosphoglyceromutase</shortName>
        <shortName evidence="1">dPGM</shortName>
        <ecNumber evidence="1">5.4.2.11</ecNumber>
    </recommendedName>
</protein>
<keyword id="KW-0312">Gluconeogenesis</keyword>
<keyword id="KW-0324">Glycolysis</keyword>
<keyword id="KW-0413">Isomerase</keyword>
<keyword id="KW-1185">Reference proteome</keyword>
<gene>
    <name evidence="1" type="primary">gpmA</name>
    <name type="ordered locus">CC_2261</name>
</gene>
<feature type="chain" id="PRO_0000179862" description="2,3-bisphosphoglycerate-dependent phosphoglycerate mutase">
    <location>
        <begin position="1"/>
        <end position="237"/>
    </location>
</feature>
<feature type="active site" description="Tele-phosphohistidine intermediate" evidence="1">
    <location>
        <position position="9"/>
    </location>
</feature>
<feature type="active site" description="Proton donor/acceptor" evidence="1">
    <location>
        <position position="87"/>
    </location>
</feature>
<feature type="binding site" evidence="1">
    <location>
        <begin position="8"/>
        <end position="15"/>
    </location>
    <ligand>
        <name>substrate</name>
    </ligand>
</feature>
<feature type="binding site" evidence="1">
    <location>
        <begin position="21"/>
        <end position="22"/>
    </location>
    <ligand>
        <name>substrate</name>
    </ligand>
</feature>
<feature type="binding site" evidence="1">
    <location>
        <position position="60"/>
    </location>
    <ligand>
        <name>substrate</name>
    </ligand>
</feature>
<feature type="binding site" evidence="1">
    <location>
        <begin position="87"/>
        <end position="90"/>
    </location>
    <ligand>
        <name>substrate</name>
    </ligand>
</feature>
<feature type="binding site" evidence="1">
    <location>
        <position position="98"/>
    </location>
    <ligand>
        <name>substrate</name>
    </ligand>
</feature>
<feature type="binding site" evidence="1">
    <location>
        <begin position="114"/>
        <end position="115"/>
    </location>
    <ligand>
        <name>substrate</name>
    </ligand>
</feature>
<feature type="binding site" evidence="1">
    <location>
        <begin position="180"/>
        <end position="181"/>
    </location>
    <ligand>
        <name>substrate</name>
    </ligand>
</feature>
<feature type="site" description="Transition state stabilizer" evidence="1">
    <location>
        <position position="179"/>
    </location>
</feature>
<reference key="1">
    <citation type="journal article" date="2001" name="Proc. Natl. Acad. Sci. U.S.A.">
        <title>Complete genome sequence of Caulobacter crescentus.</title>
        <authorList>
            <person name="Nierman W.C."/>
            <person name="Feldblyum T.V."/>
            <person name="Laub M.T."/>
            <person name="Paulsen I.T."/>
            <person name="Nelson K.E."/>
            <person name="Eisen J.A."/>
            <person name="Heidelberg J.F."/>
            <person name="Alley M.R.K."/>
            <person name="Ohta N."/>
            <person name="Maddock J.R."/>
            <person name="Potocka I."/>
            <person name="Nelson W.C."/>
            <person name="Newton A."/>
            <person name="Stephens C."/>
            <person name="Phadke N.D."/>
            <person name="Ely B."/>
            <person name="DeBoy R.T."/>
            <person name="Dodson R.J."/>
            <person name="Durkin A.S."/>
            <person name="Gwinn M.L."/>
            <person name="Haft D.H."/>
            <person name="Kolonay J.F."/>
            <person name="Smit J."/>
            <person name="Craven M.B."/>
            <person name="Khouri H.M."/>
            <person name="Shetty J."/>
            <person name="Berry K.J."/>
            <person name="Utterback T.R."/>
            <person name="Tran K."/>
            <person name="Wolf A.M."/>
            <person name="Vamathevan J.J."/>
            <person name="Ermolaeva M.D."/>
            <person name="White O."/>
            <person name="Salzberg S.L."/>
            <person name="Venter J.C."/>
            <person name="Shapiro L."/>
            <person name="Fraser C.M."/>
        </authorList>
    </citation>
    <scope>NUCLEOTIDE SEQUENCE [LARGE SCALE GENOMIC DNA]</scope>
    <source>
        <strain>ATCC 19089 / CIP 103742 / CB 15</strain>
    </source>
</reference>
<organism>
    <name type="scientific">Caulobacter vibrioides (strain ATCC 19089 / CIP 103742 / CB 15)</name>
    <name type="common">Caulobacter crescentus</name>
    <dbReference type="NCBI Taxonomy" id="190650"/>
    <lineage>
        <taxon>Bacteria</taxon>
        <taxon>Pseudomonadati</taxon>
        <taxon>Pseudomonadota</taxon>
        <taxon>Alphaproteobacteria</taxon>
        <taxon>Caulobacterales</taxon>
        <taxon>Caulobacteraceae</taxon>
        <taxon>Caulobacter</taxon>
    </lineage>
</organism>
<name>GPMA_CAUVC</name>
<sequence>MPTLVLLRHGQSQWNLENRFTGWVDVDLTAEGEAQARKGGELIAAAGIEIDRLFTSVQTRAIRTGNLALDAAKQSFVPVTKDWRLNERHYGGLTGLNKAETAEKHGVEQVTIWRRSYDIPPPELAPGGEYDFSKDRRYKGASLPSTESLATTLVRVLPYWESDIAPHLKAGETVLIAAHGNSLRAIVKHLFNVPDDQIVGVEIPTGNPLVIDLDAALKPTGARYLDDSRAEALPKVG</sequence>
<dbReference type="EC" id="5.4.2.11" evidence="1"/>
<dbReference type="EMBL" id="AE005673">
    <property type="protein sequence ID" value="AAK24232.1"/>
    <property type="molecule type" value="Genomic_DNA"/>
</dbReference>
<dbReference type="PIR" id="D87529">
    <property type="entry name" value="D87529"/>
</dbReference>
<dbReference type="RefSeq" id="NP_421064.1">
    <property type="nucleotide sequence ID" value="NC_002696.2"/>
</dbReference>
<dbReference type="RefSeq" id="WP_010920122.1">
    <property type="nucleotide sequence ID" value="NC_002696.2"/>
</dbReference>
<dbReference type="SMR" id="Q9A634"/>
<dbReference type="STRING" id="190650.CC_2261"/>
<dbReference type="EnsemblBacteria" id="AAK24232">
    <property type="protein sequence ID" value="AAK24232"/>
    <property type="gene ID" value="CC_2261"/>
</dbReference>
<dbReference type="KEGG" id="ccr:CC_2261"/>
<dbReference type="PATRIC" id="fig|190650.5.peg.2279"/>
<dbReference type="eggNOG" id="COG0588">
    <property type="taxonomic scope" value="Bacteria"/>
</dbReference>
<dbReference type="HOGENOM" id="CLU_033323_1_1_5"/>
<dbReference type="BioCyc" id="CAULO:CC2261-MONOMER"/>
<dbReference type="UniPathway" id="UPA00109">
    <property type="reaction ID" value="UER00186"/>
</dbReference>
<dbReference type="Proteomes" id="UP000001816">
    <property type="component" value="Chromosome"/>
</dbReference>
<dbReference type="GO" id="GO:0004619">
    <property type="term" value="F:phosphoglycerate mutase activity"/>
    <property type="evidence" value="ECO:0007669"/>
    <property type="project" value="UniProtKB-EC"/>
</dbReference>
<dbReference type="GO" id="GO:0006094">
    <property type="term" value="P:gluconeogenesis"/>
    <property type="evidence" value="ECO:0007669"/>
    <property type="project" value="UniProtKB-UniRule"/>
</dbReference>
<dbReference type="GO" id="GO:0006096">
    <property type="term" value="P:glycolytic process"/>
    <property type="evidence" value="ECO:0007669"/>
    <property type="project" value="UniProtKB-UniRule"/>
</dbReference>
<dbReference type="CDD" id="cd07067">
    <property type="entry name" value="HP_PGM_like"/>
    <property type="match status" value="1"/>
</dbReference>
<dbReference type="FunFam" id="3.40.50.1240:FF:000003">
    <property type="entry name" value="2,3-bisphosphoglycerate-dependent phosphoglycerate mutase"/>
    <property type="match status" value="1"/>
</dbReference>
<dbReference type="Gene3D" id="3.40.50.1240">
    <property type="entry name" value="Phosphoglycerate mutase-like"/>
    <property type="match status" value="1"/>
</dbReference>
<dbReference type="HAMAP" id="MF_01039">
    <property type="entry name" value="PGAM_GpmA"/>
    <property type="match status" value="1"/>
</dbReference>
<dbReference type="InterPro" id="IPR013078">
    <property type="entry name" value="His_Pase_superF_clade-1"/>
</dbReference>
<dbReference type="InterPro" id="IPR029033">
    <property type="entry name" value="His_PPase_superfam"/>
</dbReference>
<dbReference type="InterPro" id="IPR001345">
    <property type="entry name" value="PG/BPGM_mutase_AS"/>
</dbReference>
<dbReference type="InterPro" id="IPR005952">
    <property type="entry name" value="Phosphogly_mut1"/>
</dbReference>
<dbReference type="NCBIfam" id="TIGR01258">
    <property type="entry name" value="pgm_1"/>
    <property type="match status" value="1"/>
</dbReference>
<dbReference type="NCBIfam" id="NF010713">
    <property type="entry name" value="PRK14115.1"/>
    <property type="match status" value="1"/>
</dbReference>
<dbReference type="PANTHER" id="PTHR11931">
    <property type="entry name" value="PHOSPHOGLYCERATE MUTASE"/>
    <property type="match status" value="1"/>
</dbReference>
<dbReference type="Pfam" id="PF00300">
    <property type="entry name" value="His_Phos_1"/>
    <property type="match status" value="1"/>
</dbReference>
<dbReference type="PIRSF" id="PIRSF000709">
    <property type="entry name" value="6PFK_2-Ptase"/>
    <property type="match status" value="1"/>
</dbReference>
<dbReference type="SMART" id="SM00855">
    <property type="entry name" value="PGAM"/>
    <property type="match status" value="1"/>
</dbReference>
<dbReference type="SUPFAM" id="SSF53254">
    <property type="entry name" value="Phosphoglycerate mutase-like"/>
    <property type="match status" value="1"/>
</dbReference>
<dbReference type="PROSITE" id="PS00175">
    <property type="entry name" value="PG_MUTASE"/>
    <property type="match status" value="1"/>
</dbReference>
<accession>Q9A634</accession>